<comment type="function">
    <text evidence="1">Forms part of the ribosomal stalk which helps the ribosome interact with GTP-bound translation factors. Is thus essential for accurate translation.</text>
</comment>
<comment type="subunit">
    <text evidence="1">Homodimer. Part of the ribosomal stalk of the 50S ribosomal subunit. Forms a multimeric L10(L12)X complex, where L10 forms an elongated spine to which 2 to 4 L12 dimers bind in a sequential fashion. Binds GTP-bound translation factors.</text>
</comment>
<comment type="similarity">
    <text evidence="1">Belongs to the bacterial ribosomal protein bL12 family.</text>
</comment>
<keyword id="KW-1185">Reference proteome</keyword>
<keyword id="KW-0687">Ribonucleoprotein</keyword>
<keyword id="KW-0689">Ribosomal protein</keyword>
<dbReference type="EMBL" id="CR522870">
    <property type="protein sequence ID" value="CAG35845.1"/>
    <property type="molecule type" value="Genomic_DNA"/>
</dbReference>
<dbReference type="RefSeq" id="WP_011188359.1">
    <property type="nucleotide sequence ID" value="NC_006138.1"/>
</dbReference>
<dbReference type="SMR" id="Q6AP79"/>
<dbReference type="STRING" id="177439.DP1116"/>
<dbReference type="KEGG" id="dps:DP1116"/>
<dbReference type="eggNOG" id="COG0222">
    <property type="taxonomic scope" value="Bacteria"/>
</dbReference>
<dbReference type="HOGENOM" id="CLU_086499_3_2_7"/>
<dbReference type="Proteomes" id="UP000000602">
    <property type="component" value="Chromosome"/>
</dbReference>
<dbReference type="GO" id="GO:0022625">
    <property type="term" value="C:cytosolic large ribosomal subunit"/>
    <property type="evidence" value="ECO:0007669"/>
    <property type="project" value="TreeGrafter"/>
</dbReference>
<dbReference type="GO" id="GO:0003729">
    <property type="term" value="F:mRNA binding"/>
    <property type="evidence" value="ECO:0007669"/>
    <property type="project" value="TreeGrafter"/>
</dbReference>
<dbReference type="GO" id="GO:0003735">
    <property type="term" value="F:structural constituent of ribosome"/>
    <property type="evidence" value="ECO:0007669"/>
    <property type="project" value="InterPro"/>
</dbReference>
<dbReference type="GO" id="GO:0006412">
    <property type="term" value="P:translation"/>
    <property type="evidence" value="ECO:0007669"/>
    <property type="project" value="UniProtKB-UniRule"/>
</dbReference>
<dbReference type="CDD" id="cd00387">
    <property type="entry name" value="Ribosomal_L7_L12"/>
    <property type="match status" value="1"/>
</dbReference>
<dbReference type="FunFam" id="3.30.1390.10:FF:000001">
    <property type="entry name" value="50S ribosomal protein L7/L12"/>
    <property type="match status" value="1"/>
</dbReference>
<dbReference type="Gene3D" id="3.30.1390.10">
    <property type="match status" value="1"/>
</dbReference>
<dbReference type="Gene3D" id="1.20.5.710">
    <property type="entry name" value="Single helix bin"/>
    <property type="match status" value="1"/>
</dbReference>
<dbReference type="HAMAP" id="MF_00368">
    <property type="entry name" value="Ribosomal_bL12"/>
    <property type="match status" value="1"/>
</dbReference>
<dbReference type="InterPro" id="IPR000206">
    <property type="entry name" value="Ribosomal_bL12"/>
</dbReference>
<dbReference type="InterPro" id="IPR013823">
    <property type="entry name" value="Ribosomal_bL12_C"/>
</dbReference>
<dbReference type="InterPro" id="IPR014719">
    <property type="entry name" value="Ribosomal_bL12_C/ClpS-like"/>
</dbReference>
<dbReference type="InterPro" id="IPR008932">
    <property type="entry name" value="Ribosomal_bL12_oligo"/>
</dbReference>
<dbReference type="InterPro" id="IPR036235">
    <property type="entry name" value="Ribosomal_bL12_oligo_N_sf"/>
</dbReference>
<dbReference type="NCBIfam" id="TIGR00855">
    <property type="entry name" value="L12"/>
    <property type="match status" value="1"/>
</dbReference>
<dbReference type="PANTHER" id="PTHR45987">
    <property type="entry name" value="39S RIBOSOMAL PROTEIN L12"/>
    <property type="match status" value="1"/>
</dbReference>
<dbReference type="PANTHER" id="PTHR45987:SF4">
    <property type="entry name" value="LARGE RIBOSOMAL SUBUNIT PROTEIN BL12M"/>
    <property type="match status" value="1"/>
</dbReference>
<dbReference type="Pfam" id="PF00542">
    <property type="entry name" value="Ribosomal_L12"/>
    <property type="match status" value="1"/>
</dbReference>
<dbReference type="Pfam" id="PF16320">
    <property type="entry name" value="Ribosomal_L12_N"/>
    <property type="match status" value="1"/>
</dbReference>
<dbReference type="SUPFAM" id="SSF54736">
    <property type="entry name" value="ClpS-like"/>
    <property type="match status" value="1"/>
</dbReference>
<dbReference type="SUPFAM" id="SSF48300">
    <property type="entry name" value="Ribosomal protein L7/12, oligomerisation (N-terminal) domain"/>
    <property type="match status" value="1"/>
</dbReference>
<proteinExistence type="inferred from homology"/>
<gene>
    <name evidence="1" type="primary">rplL</name>
    <name type="ordered locus">DP1116</name>
</gene>
<sequence>MAVTKEDVIDFIAGMSVLELSELIGEFEEKFGVSAAAPVAVAAAGVAAEAVEEKTEFDVILASAGSEKIKVIKEVRAITGLGLKEAKSLVESAPAALKEGVSKDEAAELKAKLEAVGATAEVK</sequence>
<protein>
    <recommendedName>
        <fullName evidence="1">Large ribosomal subunit protein bL12</fullName>
    </recommendedName>
    <alternativeName>
        <fullName evidence="2">50S ribosomal protein L7/L12</fullName>
    </alternativeName>
</protein>
<feature type="chain" id="PRO_0000243418" description="Large ribosomal subunit protein bL12">
    <location>
        <begin position="1"/>
        <end position="123"/>
    </location>
</feature>
<name>RL7_DESPS</name>
<organism>
    <name type="scientific">Desulfotalea psychrophila (strain LSv54 / DSM 12343)</name>
    <dbReference type="NCBI Taxonomy" id="177439"/>
    <lineage>
        <taxon>Bacteria</taxon>
        <taxon>Pseudomonadati</taxon>
        <taxon>Thermodesulfobacteriota</taxon>
        <taxon>Desulfobulbia</taxon>
        <taxon>Desulfobulbales</taxon>
        <taxon>Desulfocapsaceae</taxon>
        <taxon>Desulfotalea</taxon>
    </lineage>
</organism>
<reference key="1">
    <citation type="journal article" date="2004" name="Environ. Microbiol.">
        <title>The genome of Desulfotalea psychrophila, a sulfate-reducing bacterium from permanently cold Arctic sediments.</title>
        <authorList>
            <person name="Rabus R."/>
            <person name="Ruepp A."/>
            <person name="Frickey T."/>
            <person name="Rattei T."/>
            <person name="Fartmann B."/>
            <person name="Stark M."/>
            <person name="Bauer M."/>
            <person name="Zibat A."/>
            <person name="Lombardot T."/>
            <person name="Becker I."/>
            <person name="Amann J."/>
            <person name="Gellner K."/>
            <person name="Teeling H."/>
            <person name="Leuschner W.D."/>
            <person name="Gloeckner F.-O."/>
            <person name="Lupas A.N."/>
            <person name="Amann R."/>
            <person name="Klenk H.-P."/>
        </authorList>
    </citation>
    <scope>NUCLEOTIDE SEQUENCE [LARGE SCALE GENOMIC DNA]</scope>
    <source>
        <strain>DSM 12343 / LSv54</strain>
    </source>
</reference>
<evidence type="ECO:0000255" key="1">
    <source>
        <dbReference type="HAMAP-Rule" id="MF_00368"/>
    </source>
</evidence>
<evidence type="ECO:0000305" key="2"/>
<accession>Q6AP79</accession>